<proteinExistence type="inferred from homology"/>
<reference key="1">
    <citation type="journal article" date="2005" name="Nature">
        <title>Genome sequencing and analysis of Aspergillus oryzae.</title>
        <authorList>
            <person name="Machida M."/>
            <person name="Asai K."/>
            <person name="Sano M."/>
            <person name="Tanaka T."/>
            <person name="Kumagai T."/>
            <person name="Terai G."/>
            <person name="Kusumoto K."/>
            <person name="Arima T."/>
            <person name="Akita O."/>
            <person name="Kashiwagi Y."/>
            <person name="Abe K."/>
            <person name="Gomi K."/>
            <person name="Horiuchi H."/>
            <person name="Kitamoto K."/>
            <person name="Kobayashi T."/>
            <person name="Takeuchi M."/>
            <person name="Denning D.W."/>
            <person name="Galagan J.E."/>
            <person name="Nierman W.C."/>
            <person name="Yu J."/>
            <person name="Archer D.B."/>
            <person name="Bennett J.W."/>
            <person name="Bhatnagar D."/>
            <person name="Cleveland T.E."/>
            <person name="Fedorova N.D."/>
            <person name="Gotoh O."/>
            <person name="Horikawa H."/>
            <person name="Hosoyama A."/>
            <person name="Ichinomiya M."/>
            <person name="Igarashi R."/>
            <person name="Iwashita K."/>
            <person name="Juvvadi P.R."/>
            <person name="Kato M."/>
            <person name="Kato Y."/>
            <person name="Kin T."/>
            <person name="Kokubun A."/>
            <person name="Maeda H."/>
            <person name="Maeyama N."/>
            <person name="Maruyama J."/>
            <person name="Nagasaki H."/>
            <person name="Nakajima T."/>
            <person name="Oda K."/>
            <person name="Okada K."/>
            <person name="Paulsen I."/>
            <person name="Sakamoto K."/>
            <person name="Sawano T."/>
            <person name="Takahashi M."/>
            <person name="Takase K."/>
            <person name="Terabayashi Y."/>
            <person name="Wortman J.R."/>
            <person name="Yamada O."/>
            <person name="Yamagata Y."/>
            <person name="Anazawa H."/>
            <person name="Hata Y."/>
            <person name="Koide Y."/>
            <person name="Komori T."/>
            <person name="Koyama Y."/>
            <person name="Minetoki T."/>
            <person name="Suharnan S."/>
            <person name="Tanaka A."/>
            <person name="Isono K."/>
            <person name="Kuhara S."/>
            <person name="Ogasawara N."/>
            <person name="Kikuchi H."/>
        </authorList>
    </citation>
    <scope>NUCLEOTIDE SEQUENCE [LARGE SCALE GENOMIC DNA]</scope>
    <source>
        <strain>ATCC 42149 / RIB 40</strain>
    </source>
</reference>
<gene>
    <name type="primary">pan1</name>
    <name type="ORF">AO090026000829</name>
</gene>
<organism>
    <name type="scientific">Aspergillus oryzae (strain ATCC 42149 / RIB 40)</name>
    <name type="common">Yellow koji mold</name>
    <dbReference type="NCBI Taxonomy" id="510516"/>
    <lineage>
        <taxon>Eukaryota</taxon>
        <taxon>Fungi</taxon>
        <taxon>Dikarya</taxon>
        <taxon>Ascomycota</taxon>
        <taxon>Pezizomycotina</taxon>
        <taxon>Eurotiomycetes</taxon>
        <taxon>Eurotiomycetidae</taxon>
        <taxon>Eurotiales</taxon>
        <taxon>Aspergillaceae</taxon>
        <taxon>Aspergillus</taxon>
        <taxon>Aspergillus subgen. Circumdati</taxon>
    </lineage>
</organism>
<feature type="chain" id="PRO_0000349468" description="Actin cytoskeleton-regulatory complex protein pan1">
    <location>
        <begin position="1"/>
        <end position="1473"/>
    </location>
</feature>
<feature type="domain" description="EH 1" evidence="3">
    <location>
        <begin position="166"/>
        <end position="254"/>
    </location>
</feature>
<feature type="domain" description="EF-hand 1" evidence="5">
    <location>
        <begin position="198"/>
        <end position="233"/>
    </location>
</feature>
<feature type="domain" description="EH 2" evidence="3">
    <location>
        <begin position="458"/>
        <end position="547"/>
    </location>
</feature>
<feature type="domain" description="EF-hand 2" evidence="5">
    <location>
        <begin position="491"/>
        <end position="526"/>
    </location>
</feature>
<feature type="domain" description="WH2" evidence="4">
    <location>
        <begin position="1440"/>
        <end position="1457"/>
    </location>
</feature>
<feature type="region of interest" description="Disordered" evidence="6">
    <location>
        <begin position="1"/>
        <end position="121"/>
    </location>
</feature>
<feature type="region of interest" description="Disordered" evidence="6">
    <location>
        <begin position="134"/>
        <end position="153"/>
    </location>
</feature>
<feature type="region of interest" description="Disordered" evidence="6">
    <location>
        <begin position="266"/>
        <end position="366"/>
    </location>
</feature>
<feature type="region of interest" description="Disordered" evidence="6">
    <location>
        <begin position="609"/>
        <end position="645"/>
    </location>
</feature>
<feature type="region of interest" description="Disordered" evidence="6">
    <location>
        <begin position="793"/>
        <end position="837"/>
    </location>
</feature>
<feature type="region of interest" description="Disordered" evidence="6">
    <location>
        <begin position="891"/>
        <end position="1265"/>
    </location>
</feature>
<feature type="region of interest" description="Disordered" evidence="6">
    <location>
        <begin position="1277"/>
        <end position="1473"/>
    </location>
</feature>
<feature type="coiled-coil region" evidence="2">
    <location>
        <begin position="678"/>
        <end position="759"/>
    </location>
</feature>
<feature type="coiled-coil region" evidence="2">
    <location>
        <begin position="963"/>
        <end position="1163"/>
    </location>
</feature>
<feature type="compositionally biased region" description="Low complexity" evidence="6">
    <location>
        <begin position="24"/>
        <end position="47"/>
    </location>
</feature>
<feature type="compositionally biased region" description="Polar residues" evidence="6">
    <location>
        <begin position="62"/>
        <end position="78"/>
    </location>
</feature>
<feature type="compositionally biased region" description="Low complexity" evidence="6">
    <location>
        <begin position="79"/>
        <end position="92"/>
    </location>
</feature>
<feature type="compositionally biased region" description="Polar residues" evidence="6">
    <location>
        <begin position="93"/>
        <end position="118"/>
    </location>
</feature>
<feature type="compositionally biased region" description="Pro residues" evidence="6">
    <location>
        <begin position="289"/>
        <end position="298"/>
    </location>
</feature>
<feature type="compositionally biased region" description="Polar residues" evidence="6">
    <location>
        <begin position="301"/>
        <end position="339"/>
    </location>
</feature>
<feature type="compositionally biased region" description="Low complexity" evidence="6">
    <location>
        <begin position="344"/>
        <end position="360"/>
    </location>
</feature>
<feature type="compositionally biased region" description="Polar residues" evidence="6">
    <location>
        <begin position="627"/>
        <end position="638"/>
    </location>
</feature>
<feature type="compositionally biased region" description="Basic and acidic residues" evidence="6">
    <location>
        <begin position="810"/>
        <end position="837"/>
    </location>
</feature>
<feature type="compositionally biased region" description="Basic and acidic residues" evidence="6">
    <location>
        <begin position="893"/>
        <end position="915"/>
    </location>
</feature>
<feature type="compositionally biased region" description="Low complexity" evidence="6">
    <location>
        <begin position="925"/>
        <end position="934"/>
    </location>
</feature>
<feature type="compositionally biased region" description="Basic and acidic residues" evidence="6">
    <location>
        <begin position="935"/>
        <end position="953"/>
    </location>
</feature>
<feature type="compositionally biased region" description="Basic and acidic residues" evidence="6">
    <location>
        <begin position="973"/>
        <end position="1005"/>
    </location>
</feature>
<feature type="compositionally biased region" description="Basic and acidic residues" evidence="6">
    <location>
        <begin position="1054"/>
        <end position="1097"/>
    </location>
</feature>
<feature type="compositionally biased region" description="Basic and acidic residues" evidence="6">
    <location>
        <begin position="1108"/>
        <end position="1128"/>
    </location>
</feature>
<feature type="compositionally biased region" description="Basic and acidic residues" evidence="6">
    <location>
        <begin position="1135"/>
        <end position="1147"/>
    </location>
</feature>
<feature type="compositionally biased region" description="Acidic residues" evidence="6">
    <location>
        <begin position="1152"/>
        <end position="1165"/>
    </location>
</feature>
<feature type="compositionally biased region" description="Polar residues" evidence="6">
    <location>
        <begin position="1168"/>
        <end position="1180"/>
    </location>
</feature>
<feature type="compositionally biased region" description="Polar residues" evidence="6">
    <location>
        <begin position="1208"/>
        <end position="1218"/>
    </location>
</feature>
<feature type="compositionally biased region" description="Pro residues" evidence="6">
    <location>
        <begin position="1402"/>
        <end position="1434"/>
    </location>
</feature>
<evidence type="ECO:0000250" key="1"/>
<evidence type="ECO:0000255" key="2"/>
<evidence type="ECO:0000255" key="3">
    <source>
        <dbReference type="PROSITE-ProRule" id="PRU00077"/>
    </source>
</evidence>
<evidence type="ECO:0000255" key="4">
    <source>
        <dbReference type="PROSITE-ProRule" id="PRU00406"/>
    </source>
</evidence>
<evidence type="ECO:0000255" key="5">
    <source>
        <dbReference type="PROSITE-ProRule" id="PRU00448"/>
    </source>
</evidence>
<evidence type="ECO:0000256" key="6">
    <source>
        <dbReference type="SAM" id="MobiDB-lite"/>
    </source>
</evidence>
<evidence type="ECO:0000305" key="7"/>
<accession>Q2UDY8</accession>
<sequence>MYSSSNSFMGGANSARPGQPPFMQQPSYGQQTTQQQQQHQTGLAPQPNGYGSQLSGFGGSHLQPQPTGFSPGQLQSQMTGFPQLQQQPGFQTSAQPPQLTGYSIQSQAPQLQVPSSTGLPVRLAPQTSSEIADSFRGSAGAAPPPPPKTAGSKIPNIRLSFITAQDQAKFEQLFKSAVGDSQTMSGEKAKDLLLRSRLPGSDLSKIWVLSDTTKSGQLFFPEFALAMYLCNIRITGRGLPDALPEKIKNEVSSMVDIISFQVPDTQPEMAFPTNAPKFDAPLLENKSAPPAPQQPQPQQPTHSQLLTQLTAQPTGFHTQPTGIQSTQASFPGQSSSLVPQATAFPGQSQQQFLQTQPTGLMSNPQPTGYSGLRPPVPPMPTSLGPNLSPAQTGGVSGLVAQPTGVPGQWGFVNAPSSGLPNIEALKQQLMPQPGREGGFSAAGLSGNAHIPWAITKEEKKIYDDLFRAWDGFHKGFIGGDTAIEIMGQSGLDQKDLERIWTLADPHNRGRLNMDEFAVAMHLIYRKLNGYPVPNRLPPELVPPSTRNLNDSIGTIKSMLSQDAESRKASGAFLQPQKTGVSYLKDHSFRGGSGVSPGFGRKDATLFKNNDEAASGYRSSARRRVGNNGRTPSPATSQTSEEELSVGQLRKKIRETQIMLDAVDFQDENRAEEEDALDRRDRREVESLLDRIRRVQDDIDTHPDAAFRNLDNGAERRSLRRQLQSYEDQVPQVASDVRRVEREIAEAKLELFRLKDAKAHPNSASNIVGTGPGGAVTEADRIKARARARMQARAAELAGRPTPSSQEDDGAAARRVEAESAKVKADREKNDAMTRDVEDSVKDFARSLEDTLKDASENSTREHERRRWEDALGVEDVIRDFIYDLKRNSRTAYVRKEEASRSMHEEHERSRYDEAPATRPSPPPSTGSTGSLPGSTHEDRVAAARERAQKRIAERMAAAGLKPHNNTAETLLQRQEREKKEREDRLKQAEEEDTRREQERQRRLAEEQGGSMAQPAKPASKKPPPAPPSRRGRTDSAGQAEAKRAAEESAIVEQAAREQTIREEEEAQQERKRLEDDARKREEEFQREKEAQEARLRALQEQVQQGKIKKQEAKRRKEEADRLAKEQEAKLTVQRAELEMAKERERQLQLELEALDEESSSDEEGPENITPQHSTPGQSQILPEVDIAAPVAPSALVPPVPGPEPDRPTSATSSPTSDRTGLAHLPLETESKNPYFKKISLPAESQVATPQPISKAPVTSPKADVQSTNPFHRLAQQQENAKPAFTAAGPIERVSRARPEVDDDWSAAGSDFDSSDDDERPGGGSAKQLASILFGTMAPPRPLSAMDDKSPSKPSTPAPDTPVAASTAPEADGTLSIPSASIPPPPPPVVAQVPSIALSSGPPDAPPPPPPPPVPHMAPSAPPPGIPPPPAPPAAPAGAPNRSALLASIQAGKGLRKVQTNDRSLSSVAGRVLD</sequence>
<keyword id="KW-0009">Actin-binding</keyword>
<keyword id="KW-1003">Cell membrane</keyword>
<keyword id="KW-0175">Coiled coil</keyword>
<keyword id="KW-0963">Cytoplasm</keyword>
<keyword id="KW-0206">Cytoskeleton</keyword>
<keyword id="KW-0254">Endocytosis</keyword>
<keyword id="KW-0967">Endosome</keyword>
<keyword id="KW-0472">Membrane</keyword>
<keyword id="KW-1185">Reference proteome</keyword>
<keyword id="KW-0677">Repeat</keyword>
<comment type="function">
    <text evidence="1">Component of the PAN1 actin cytoskeleton-regulatory complex required for the internalization of endosomes during actin-coupled endocytosis. The complex links the site of endocytosis to the cell membrane-associated actin cytoskeleton. Mediates uptake of external molecules and vacuolar degradation of plasma membrane proteins. Plays a role in the proper organization of the cell membrane-associated actin cytoskeleton and promotes its destabilization (By similarity).</text>
</comment>
<comment type="subunit">
    <text evidence="1">Component of the PAN1 actin cytoskeleton-regulatory complex.</text>
</comment>
<comment type="subcellular location">
    <subcellularLocation>
        <location evidence="1">Cell membrane</location>
        <topology evidence="1">Peripheral membrane protein</topology>
        <orientation evidence="1">Cytoplasmic side</orientation>
    </subcellularLocation>
    <subcellularLocation>
        <location evidence="1">Endosome membrane</location>
        <topology evidence="1">Peripheral membrane protein</topology>
        <orientation evidence="1">Cytoplasmic side</orientation>
    </subcellularLocation>
    <subcellularLocation>
        <location evidence="1">Cytoplasm</location>
        <location evidence="1">Cytoskeleton</location>
        <location evidence="1">Actin patch</location>
    </subcellularLocation>
    <text evidence="1">Cytoplasmic and cortical actin patches.</text>
</comment>
<comment type="similarity">
    <text evidence="7">Belongs to the PAN1 family.</text>
</comment>
<dbReference type="EMBL" id="BA000051">
    <property type="protein sequence ID" value="BAE60227.1"/>
    <property type="molecule type" value="Genomic_DNA"/>
</dbReference>
<dbReference type="RefSeq" id="XP_001822229.1">
    <property type="nucleotide sequence ID" value="XM_001822177.1"/>
</dbReference>
<dbReference type="SMR" id="Q2UDY8"/>
<dbReference type="EnsemblFungi" id="BAE60227">
    <property type="protein sequence ID" value="BAE60227"/>
    <property type="gene ID" value="AO090026000829"/>
</dbReference>
<dbReference type="GeneID" id="5994257"/>
<dbReference type="KEGG" id="aor:AO090026000829"/>
<dbReference type="VEuPathDB" id="FungiDB:AO090026000829"/>
<dbReference type="HOGENOM" id="CLU_001963_1_0_1"/>
<dbReference type="OMA" id="GMPGQWG"/>
<dbReference type="OrthoDB" id="126988at5052"/>
<dbReference type="Proteomes" id="UP000006564">
    <property type="component" value="Chromosome 3"/>
</dbReference>
<dbReference type="GO" id="GO:0030479">
    <property type="term" value="C:actin cortical patch"/>
    <property type="evidence" value="ECO:0007669"/>
    <property type="project" value="UniProtKB-SubCell"/>
</dbReference>
<dbReference type="GO" id="GO:0010008">
    <property type="term" value="C:endosome membrane"/>
    <property type="evidence" value="ECO:0007669"/>
    <property type="project" value="UniProtKB-SubCell"/>
</dbReference>
<dbReference type="GO" id="GO:0005886">
    <property type="term" value="C:plasma membrane"/>
    <property type="evidence" value="ECO:0007669"/>
    <property type="project" value="UniProtKB-SubCell"/>
</dbReference>
<dbReference type="GO" id="GO:0003779">
    <property type="term" value="F:actin binding"/>
    <property type="evidence" value="ECO:0007669"/>
    <property type="project" value="UniProtKB-KW"/>
</dbReference>
<dbReference type="GO" id="GO:0005509">
    <property type="term" value="F:calcium ion binding"/>
    <property type="evidence" value="ECO:0007669"/>
    <property type="project" value="InterPro"/>
</dbReference>
<dbReference type="GO" id="GO:0006897">
    <property type="term" value="P:endocytosis"/>
    <property type="evidence" value="ECO:0007669"/>
    <property type="project" value="UniProtKB-KW"/>
</dbReference>
<dbReference type="GO" id="GO:0016197">
    <property type="term" value="P:endosomal transport"/>
    <property type="evidence" value="ECO:0007669"/>
    <property type="project" value="TreeGrafter"/>
</dbReference>
<dbReference type="CDD" id="cd00052">
    <property type="entry name" value="EH"/>
    <property type="match status" value="2"/>
</dbReference>
<dbReference type="FunFam" id="1.10.238.10:FF:000349">
    <property type="entry name" value="Actin cytoskeleton-regulatory complex protein PAN1"/>
    <property type="match status" value="1"/>
</dbReference>
<dbReference type="Gene3D" id="1.10.238.10">
    <property type="entry name" value="EF-hand"/>
    <property type="match status" value="2"/>
</dbReference>
<dbReference type="InterPro" id="IPR011992">
    <property type="entry name" value="EF-hand-dom_pair"/>
</dbReference>
<dbReference type="InterPro" id="IPR002048">
    <property type="entry name" value="EF_hand_dom"/>
</dbReference>
<dbReference type="InterPro" id="IPR000261">
    <property type="entry name" value="EH_dom"/>
</dbReference>
<dbReference type="InterPro" id="IPR003124">
    <property type="entry name" value="WH2_dom"/>
</dbReference>
<dbReference type="PANTHER" id="PTHR11216">
    <property type="entry name" value="EH DOMAIN"/>
    <property type="match status" value="1"/>
</dbReference>
<dbReference type="Pfam" id="PF12763">
    <property type="entry name" value="EH"/>
    <property type="match status" value="2"/>
</dbReference>
<dbReference type="Pfam" id="PF02205">
    <property type="entry name" value="WH2"/>
    <property type="match status" value="1"/>
</dbReference>
<dbReference type="SMART" id="SM00027">
    <property type="entry name" value="EH"/>
    <property type="match status" value="2"/>
</dbReference>
<dbReference type="SUPFAM" id="SSF47473">
    <property type="entry name" value="EF-hand"/>
    <property type="match status" value="2"/>
</dbReference>
<dbReference type="PROSITE" id="PS50222">
    <property type="entry name" value="EF_HAND_2"/>
    <property type="match status" value="2"/>
</dbReference>
<dbReference type="PROSITE" id="PS50031">
    <property type="entry name" value="EH"/>
    <property type="match status" value="2"/>
</dbReference>
<dbReference type="PROSITE" id="PS51082">
    <property type="entry name" value="WH2"/>
    <property type="match status" value="1"/>
</dbReference>
<name>PAN1_ASPOR</name>
<protein>
    <recommendedName>
        <fullName>Actin cytoskeleton-regulatory complex protein pan1</fullName>
    </recommendedName>
</protein>